<proteinExistence type="inferred from homology"/>
<protein>
    <recommendedName>
        <fullName evidence="1">Large ribosomal subunit protein uL4</fullName>
    </recommendedName>
    <alternativeName>
        <fullName evidence="2">50S ribosomal protein L4</fullName>
    </alternativeName>
</protein>
<accession>B0T2C3</accession>
<organism>
    <name type="scientific">Caulobacter sp. (strain K31)</name>
    <dbReference type="NCBI Taxonomy" id="366602"/>
    <lineage>
        <taxon>Bacteria</taxon>
        <taxon>Pseudomonadati</taxon>
        <taxon>Pseudomonadota</taxon>
        <taxon>Alphaproteobacteria</taxon>
        <taxon>Caulobacterales</taxon>
        <taxon>Caulobacteraceae</taxon>
        <taxon>Caulobacter</taxon>
    </lineage>
</organism>
<reference key="1">
    <citation type="submission" date="2008-01" db="EMBL/GenBank/DDBJ databases">
        <title>Complete sequence of chromosome of Caulobacter sp. K31.</title>
        <authorList>
            <consortium name="US DOE Joint Genome Institute"/>
            <person name="Copeland A."/>
            <person name="Lucas S."/>
            <person name="Lapidus A."/>
            <person name="Barry K."/>
            <person name="Glavina del Rio T."/>
            <person name="Dalin E."/>
            <person name="Tice H."/>
            <person name="Pitluck S."/>
            <person name="Bruce D."/>
            <person name="Goodwin L."/>
            <person name="Thompson L.S."/>
            <person name="Brettin T."/>
            <person name="Detter J.C."/>
            <person name="Han C."/>
            <person name="Schmutz J."/>
            <person name="Larimer F."/>
            <person name="Land M."/>
            <person name="Hauser L."/>
            <person name="Kyrpides N."/>
            <person name="Kim E."/>
            <person name="Stephens C."/>
            <person name="Richardson P."/>
        </authorList>
    </citation>
    <scope>NUCLEOTIDE SEQUENCE [LARGE SCALE GENOMIC DNA]</scope>
    <source>
        <strain>K31</strain>
    </source>
</reference>
<evidence type="ECO:0000255" key="1">
    <source>
        <dbReference type="HAMAP-Rule" id="MF_01328"/>
    </source>
</evidence>
<evidence type="ECO:0000305" key="2"/>
<keyword id="KW-0687">Ribonucleoprotein</keyword>
<keyword id="KW-0689">Ribosomal protein</keyword>
<keyword id="KW-0694">RNA-binding</keyword>
<keyword id="KW-0699">rRNA-binding</keyword>
<dbReference type="EMBL" id="CP000927">
    <property type="protein sequence ID" value="ABZ70744.1"/>
    <property type="molecule type" value="Genomic_DNA"/>
</dbReference>
<dbReference type="SMR" id="B0T2C3"/>
<dbReference type="STRING" id="366602.Caul_1615"/>
<dbReference type="KEGG" id="cak:Caul_1615"/>
<dbReference type="eggNOG" id="COG0088">
    <property type="taxonomic scope" value="Bacteria"/>
</dbReference>
<dbReference type="HOGENOM" id="CLU_041575_5_1_5"/>
<dbReference type="OrthoDB" id="9803201at2"/>
<dbReference type="GO" id="GO:1990904">
    <property type="term" value="C:ribonucleoprotein complex"/>
    <property type="evidence" value="ECO:0007669"/>
    <property type="project" value="UniProtKB-KW"/>
</dbReference>
<dbReference type="GO" id="GO:0005840">
    <property type="term" value="C:ribosome"/>
    <property type="evidence" value="ECO:0007669"/>
    <property type="project" value="UniProtKB-KW"/>
</dbReference>
<dbReference type="GO" id="GO:0019843">
    <property type="term" value="F:rRNA binding"/>
    <property type="evidence" value="ECO:0007669"/>
    <property type="project" value="UniProtKB-UniRule"/>
</dbReference>
<dbReference type="GO" id="GO:0003735">
    <property type="term" value="F:structural constituent of ribosome"/>
    <property type="evidence" value="ECO:0007669"/>
    <property type="project" value="InterPro"/>
</dbReference>
<dbReference type="GO" id="GO:0006412">
    <property type="term" value="P:translation"/>
    <property type="evidence" value="ECO:0007669"/>
    <property type="project" value="UniProtKB-UniRule"/>
</dbReference>
<dbReference type="Gene3D" id="3.40.1370.10">
    <property type="match status" value="1"/>
</dbReference>
<dbReference type="HAMAP" id="MF_01328_B">
    <property type="entry name" value="Ribosomal_uL4_B"/>
    <property type="match status" value="1"/>
</dbReference>
<dbReference type="InterPro" id="IPR002136">
    <property type="entry name" value="Ribosomal_uL4"/>
</dbReference>
<dbReference type="InterPro" id="IPR013005">
    <property type="entry name" value="Ribosomal_uL4-like"/>
</dbReference>
<dbReference type="InterPro" id="IPR023574">
    <property type="entry name" value="Ribosomal_uL4_dom_sf"/>
</dbReference>
<dbReference type="NCBIfam" id="TIGR03953">
    <property type="entry name" value="rplD_bact"/>
    <property type="match status" value="1"/>
</dbReference>
<dbReference type="PANTHER" id="PTHR10746">
    <property type="entry name" value="50S RIBOSOMAL PROTEIN L4"/>
    <property type="match status" value="1"/>
</dbReference>
<dbReference type="PANTHER" id="PTHR10746:SF6">
    <property type="entry name" value="LARGE RIBOSOMAL SUBUNIT PROTEIN UL4M"/>
    <property type="match status" value="1"/>
</dbReference>
<dbReference type="Pfam" id="PF00573">
    <property type="entry name" value="Ribosomal_L4"/>
    <property type="match status" value="1"/>
</dbReference>
<dbReference type="SUPFAM" id="SSF52166">
    <property type="entry name" value="Ribosomal protein L4"/>
    <property type="match status" value="1"/>
</dbReference>
<feature type="chain" id="PRO_1000086511" description="Large ribosomal subunit protein uL4">
    <location>
        <begin position="1"/>
        <end position="212"/>
    </location>
</feature>
<comment type="function">
    <text evidence="1">One of the primary rRNA binding proteins, this protein initially binds near the 5'-end of the 23S rRNA. It is important during the early stages of 50S assembly. It makes multiple contacts with different domains of the 23S rRNA in the assembled 50S subunit and ribosome.</text>
</comment>
<comment type="function">
    <text evidence="1">Forms part of the polypeptide exit tunnel.</text>
</comment>
<comment type="subunit">
    <text evidence="1">Part of the 50S ribosomal subunit.</text>
</comment>
<comment type="similarity">
    <text evidence="1">Belongs to the universal ribosomal protein uL4 family.</text>
</comment>
<gene>
    <name evidence="1" type="primary">rplD</name>
    <name type="ordered locus">Caul_1615</name>
</gene>
<name>RL4_CAUSK</name>
<sequence length="212" mass="22830">MKLDVINLDGGKAGSVDLDDAIFGIADIRGDILQRVVTWQLAKRRSGNHKIQVRNEVSRTGKKMYKQKGTGSARHGSRRAAQFVGGAKAHGPVVRSHAFDLPKKIRAMALRHALSSKAKSGSIIVLDTAVLTDPKTAALRANFDKIGLKNALVIAGPEVDGNFKLAARNIPNIDVLPNAGLNVYDVLRRHTLVLTKDAVEAISARFAEKEAA</sequence>